<comment type="function">
    <text evidence="1">Involved in the biosynthesis of branched-chain amino acids (BCAA). Catalyzes an alkyl-migration followed by a ketol-acid reduction of (S)-2-acetolactate (S2AL) to yield (R)-2,3-dihydroxy-isovalerate. In the isomerase reaction, S2AL is rearranged via a Mg-dependent methyl migration to produce 3-hydroxy-3-methyl-2-ketobutyrate (HMKB). In the reductase reaction, this 2-ketoacid undergoes a metal-dependent reduction by NADPH to yield (R)-2,3-dihydroxy-isovalerate.</text>
</comment>
<comment type="catalytic activity">
    <reaction evidence="1">
        <text>(2R)-2,3-dihydroxy-3-methylbutanoate + NADP(+) = (2S)-2-acetolactate + NADPH + H(+)</text>
        <dbReference type="Rhea" id="RHEA:22068"/>
        <dbReference type="ChEBI" id="CHEBI:15378"/>
        <dbReference type="ChEBI" id="CHEBI:49072"/>
        <dbReference type="ChEBI" id="CHEBI:57783"/>
        <dbReference type="ChEBI" id="CHEBI:58349"/>
        <dbReference type="ChEBI" id="CHEBI:58476"/>
        <dbReference type="EC" id="1.1.1.86"/>
    </reaction>
</comment>
<comment type="catalytic activity">
    <reaction evidence="1">
        <text>(2R,3R)-2,3-dihydroxy-3-methylpentanoate + NADP(+) = (S)-2-ethyl-2-hydroxy-3-oxobutanoate + NADPH + H(+)</text>
        <dbReference type="Rhea" id="RHEA:13493"/>
        <dbReference type="ChEBI" id="CHEBI:15378"/>
        <dbReference type="ChEBI" id="CHEBI:49256"/>
        <dbReference type="ChEBI" id="CHEBI:49258"/>
        <dbReference type="ChEBI" id="CHEBI:57783"/>
        <dbReference type="ChEBI" id="CHEBI:58349"/>
        <dbReference type="EC" id="1.1.1.86"/>
    </reaction>
</comment>
<comment type="cofactor">
    <cofactor evidence="1">
        <name>Mg(2+)</name>
        <dbReference type="ChEBI" id="CHEBI:18420"/>
    </cofactor>
    <text evidence="1">Binds 2 magnesium ions per subunit.</text>
</comment>
<comment type="pathway">
    <text evidence="1">Amino-acid biosynthesis; L-isoleucine biosynthesis; L-isoleucine from 2-oxobutanoate: step 2/4.</text>
</comment>
<comment type="pathway">
    <text evidence="1">Amino-acid biosynthesis; L-valine biosynthesis; L-valine from pyruvate: step 2/4.</text>
</comment>
<comment type="similarity">
    <text evidence="1">Belongs to the ketol-acid reductoisomerase family.</text>
</comment>
<evidence type="ECO:0000255" key="1">
    <source>
        <dbReference type="HAMAP-Rule" id="MF_00435"/>
    </source>
</evidence>
<evidence type="ECO:0000255" key="2">
    <source>
        <dbReference type="PROSITE-ProRule" id="PRU01197"/>
    </source>
</evidence>
<evidence type="ECO:0000255" key="3">
    <source>
        <dbReference type="PROSITE-ProRule" id="PRU01198"/>
    </source>
</evidence>
<protein>
    <recommendedName>
        <fullName evidence="1">Ketol-acid reductoisomerase (NADP(+))</fullName>
        <shortName evidence="1">KARI</shortName>
        <ecNumber evidence="1">1.1.1.86</ecNumber>
    </recommendedName>
    <alternativeName>
        <fullName evidence="1">Acetohydroxy-acid isomeroreductase</fullName>
        <shortName evidence="1">AHIR</shortName>
    </alternativeName>
    <alternativeName>
        <fullName evidence="1">Alpha-keto-beta-hydroxylacyl reductoisomerase</fullName>
    </alternativeName>
    <alternativeName>
        <fullName evidence="1">Ketol-acid reductoisomerase type 1</fullName>
    </alternativeName>
    <alternativeName>
        <fullName evidence="1">Ketol-acid reductoisomerase type I</fullName>
    </alternativeName>
</protein>
<gene>
    <name evidence="1" type="primary">ilvC</name>
    <name type="ordered locus">PYRAB13480</name>
    <name type="ORF">PAB0889</name>
</gene>
<dbReference type="EC" id="1.1.1.86" evidence="1"/>
<dbReference type="EMBL" id="AJ248287">
    <property type="protein sequence ID" value="CAB50253.1"/>
    <property type="molecule type" value="Genomic_DNA"/>
</dbReference>
<dbReference type="EMBL" id="HE613800">
    <property type="protein sequence ID" value="CCE70791.1"/>
    <property type="molecule type" value="Genomic_DNA"/>
</dbReference>
<dbReference type="PIR" id="H75044">
    <property type="entry name" value="H75044"/>
</dbReference>
<dbReference type="SMR" id="Q9UZ09"/>
<dbReference type="STRING" id="272844.PAB0889"/>
<dbReference type="KEGG" id="pab:PAB0889"/>
<dbReference type="PATRIC" id="fig|272844.11.peg.1434"/>
<dbReference type="eggNOG" id="arCOG04465">
    <property type="taxonomic scope" value="Archaea"/>
</dbReference>
<dbReference type="HOGENOM" id="CLU_033821_0_1_2"/>
<dbReference type="PhylomeDB" id="Q9UZ09"/>
<dbReference type="UniPathway" id="UPA00047">
    <property type="reaction ID" value="UER00056"/>
</dbReference>
<dbReference type="UniPathway" id="UPA00049">
    <property type="reaction ID" value="UER00060"/>
</dbReference>
<dbReference type="Proteomes" id="UP000000810">
    <property type="component" value="Chromosome"/>
</dbReference>
<dbReference type="Proteomes" id="UP000009139">
    <property type="component" value="Chromosome"/>
</dbReference>
<dbReference type="GO" id="GO:0004455">
    <property type="term" value="F:ketol-acid reductoisomerase activity"/>
    <property type="evidence" value="ECO:0007669"/>
    <property type="project" value="UniProtKB-UniRule"/>
</dbReference>
<dbReference type="GO" id="GO:0000287">
    <property type="term" value="F:magnesium ion binding"/>
    <property type="evidence" value="ECO:0007669"/>
    <property type="project" value="UniProtKB-UniRule"/>
</dbReference>
<dbReference type="GO" id="GO:0050661">
    <property type="term" value="F:NADP binding"/>
    <property type="evidence" value="ECO:0007669"/>
    <property type="project" value="InterPro"/>
</dbReference>
<dbReference type="GO" id="GO:0009097">
    <property type="term" value="P:isoleucine biosynthetic process"/>
    <property type="evidence" value="ECO:0007669"/>
    <property type="project" value="UniProtKB-UniRule"/>
</dbReference>
<dbReference type="GO" id="GO:0009099">
    <property type="term" value="P:L-valine biosynthetic process"/>
    <property type="evidence" value="ECO:0007669"/>
    <property type="project" value="UniProtKB-UniRule"/>
</dbReference>
<dbReference type="FunFam" id="3.40.50.720:FF:000023">
    <property type="entry name" value="Ketol-acid reductoisomerase (NADP(+))"/>
    <property type="match status" value="1"/>
</dbReference>
<dbReference type="Gene3D" id="6.10.240.10">
    <property type="match status" value="1"/>
</dbReference>
<dbReference type="Gene3D" id="3.40.50.720">
    <property type="entry name" value="NAD(P)-binding Rossmann-like Domain"/>
    <property type="match status" value="1"/>
</dbReference>
<dbReference type="HAMAP" id="MF_00435">
    <property type="entry name" value="IlvC"/>
    <property type="match status" value="1"/>
</dbReference>
<dbReference type="InterPro" id="IPR008927">
    <property type="entry name" value="6-PGluconate_DH-like_C_sf"/>
</dbReference>
<dbReference type="InterPro" id="IPR013023">
    <property type="entry name" value="KARI"/>
</dbReference>
<dbReference type="InterPro" id="IPR000506">
    <property type="entry name" value="KARI_C"/>
</dbReference>
<dbReference type="InterPro" id="IPR013116">
    <property type="entry name" value="KARI_N"/>
</dbReference>
<dbReference type="InterPro" id="IPR014359">
    <property type="entry name" value="KARI_prok"/>
</dbReference>
<dbReference type="InterPro" id="IPR036291">
    <property type="entry name" value="NAD(P)-bd_dom_sf"/>
</dbReference>
<dbReference type="NCBIfam" id="TIGR00465">
    <property type="entry name" value="ilvC"/>
    <property type="match status" value="1"/>
</dbReference>
<dbReference type="NCBIfam" id="NF004017">
    <property type="entry name" value="PRK05479.1"/>
    <property type="match status" value="1"/>
</dbReference>
<dbReference type="PANTHER" id="PTHR21371">
    <property type="entry name" value="KETOL-ACID REDUCTOISOMERASE, MITOCHONDRIAL"/>
    <property type="match status" value="1"/>
</dbReference>
<dbReference type="PANTHER" id="PTHR21371:SF1">
    <property type="entry name" value="KETOL-ACID REDUCTOISOMERASE, MITOCHONDRIAL"/>
    <property type="match status" value="1"/>
</dbReference>
<dbReference type="Pfam" id="PF01450">
    <property type="entry name" value="KARI_C"/>
    <property type="match status" value="1"/>
</dbReference>
<dbReference type="Pfam" id="PF07991">
    <property type="entry name" value="KARI_N"/>
    <property type="match status" value="1"/>
</dbReference>
<dbReference type="PIRSF" id="PIRSF000116">
    <property type="entry name" value="IlvC_gammaproteo"/>
    <property type="match status" value="1"/>
</dbReference>
<dbReference type="SUPFAM" id="SSF48179">
    <property type="entry name" value="6-phosphogluconate dehydrogenase C-terminal domain-like"/>
    <property type="match status" value="1"/>
</dbReference>
<dbReference type="SUPFAM" id="SSF51735">
    <property type="entry name" value="NAD(P)-binding Rossmann-fold domains"/>
    <property type="match status" value="1"/>
</dbReference>
<dbReference type="PROSITE" id="PS51851">
    <property type="entry name" value="KARI_C"/>
    <property type="match status" value="1"/>
</dbReference>
<dbReference type="PROSITE" id="PS51850">
    <property type="entry name" value="KARI_N"/>
    <property type="match status" value="1"/>
</dbReference>
<sequence length="332" mass="37176">MVKVVKVYYDDEVSMDILKDKTVAVIGYGNQGEAQAKNMRDSGVHVILGLRPSGSSWKRAEKDGFEVYTIEEAVKRADIVHILIPDLVQPKVYREHIEPYLREGQALGFSHGFNIHYKQIVPPEYVDVIMVAPKSPGKRVREKYLEGFGVPALVAVYQDYTGNAKDLALAMAKAIGCTRAGVIETTFKDETESDLIGEQLVLVGGLIELIKKGFEVLVELGYPPELAYFEACNEAKLIMDLIYERGFTGMLKAVSDTAKYGGLTVGPKVIDDHVKENMKKFAERVRSGEFAKEWISKADKASEVLEELMKPIEEHEIEKVGRFIRKMSGLER</sequence>
<feature type="chain" id="PRO_0000151396" description="Ketol-acid reductoisomerase (NADP(+))">
    <location>
        <begin position="1"/>
        <end position="332"/>
    </location>
</feature>
<feature type="domain" description="KARI N-terminal Rossmann" evidence="2">
    <location>
        <begin position="5"/>
        <end position="185"/>
    </location>
</feature>
<feature type="domain" description="KARI C-terminal knotted" evidence="3">
    <location>
        <begin position="186"/>
        <end position="331"/>
    </location>
</feature>
<feature type="active site" evidence="1">
    <location>
        <position position="111"/>
    </location>
</feature>
<feature type="binding site" evidence="1">
    <location>
        <begin position="28"/>
        <end position="31"/>
    </location>
    <ligand>
        <name>NADP(+)</name>
        <dbReference type="ChEBI" id="CHEBI:58349"/>
    </ligand>
</feature>
<feature type="binding site" evidence="1">
    <location>
        <position position="51"/>
    </location>
    <ligand>
        <name>NADP(+)</name>
        <dbReference type="ChEBI" id="CHEBI:58349"/>
    </ligand>
</feature>
<feature type="binding site" evidence="1">
    <location>
        <position position="56"/>
    </location>
    <ligand>
        <name>NADP(+)</name>
        <dbReference type="ChEBI" id="CHEBI:58349"/>
    </ligand>
</feature>
<feature type="binding site" evidence="1">
    <location>
        <begin position="86"/>
        <end position="89"/>
    </location>
    <ligand>
        <name>NADP(+)</name>
        <dbReference type="ChEBI" id="CHEBI:58349"/>
    </ligand>
</feature>
<feature type="binding site" evidence="1">
    <location>
        <position position="137"/>
    </location>
    <ligand>
        <name>NADP(+)</name>
        <dbReference type="ChEBI" id="CHEBI:58349"/>
    </ligand>
</feature>
<feature type="binding site" evidence="1">
    <location>
        <position position="194"/>
    </location>
    <ligand>
        <name>Mg(2+)</name>
        <dbReference type="ChEBI" id="CHEBI:18420"/>
        <label>1</label>
    </ligand>
</feature>
<feature type="binding site" evidence="1">
    <location>
        <position position="194"/>
    </location>
    <ligand>
        <name>Mg(2+)</name>
        <dbReference type="ChEBI" id="CHEBI:18420"/>
        <label>2</label>
    </ligand>
</feature>
<feature type="binding site" evidence="1">
    <location>
        <position position="198"/>
    </location>
    <ligand>
        <name>Mg(2+)</name>
        <dbReference type="ChEBI" id="CHEBI:18420"/>
        <label>1</label>
    </ligand>
</feature>
<feature type="binding site" evidence="1">
    <location>
        <position position="230"/>
    </location>
    <ligand>
        <name>Mg(2+)</name>
        <dbReference type="ChEBI" id="CHEBI:18420"/>
        <label>2</label>
    </ligand>
</feature>
<feature type="binding site" evidence="1">
    <location>
        <position position="234"/>
    </location>
    <ligand>
        <name>Mg(2+)</name>
        <dbReference type="ChEBI" id="CHEBI:18420"/>
        <label>2</label>
    </ligand>
</feature>
<feature type="binding site" evidence="1">
    <location>
        <position position="255"/>
    </location>
    <ligand>
        <name>substrate</name>
    </ligand>
</feature>
<accession>Q9UZ09</accession>
<accession>G8ZHF4</accession>
<reference key="1">
    <citation type="journal article" date="2003" name="Mol. Microbiol.">
        <title>An integrated analysis of the genome of the hyperthermophilic archaeon Pyrococcus abyssi.</title>
        <authorList>
            <person name="Cohen G.N."/>
            <person name="Barbe V."/>
            <person name="Flament D."/>
            <person name="Galperin M."/>
            <person name="Heilig R."/>
            <person name="Lecompte O."/>
            <person name="Poch O."/>
            <person name="Prieur D."/>
            <person name="Querellou J."/>
            <person name="Ripp R."/>
            <person name="Thierry J.-C."/>
            <person name="Van der Oost J."/>
            <person name="Weissenbach J."/>
            <person name="Zivanovic Y."/>
            <person name="Forterre P."/>
        </authorList>
    </citation>
    <scope>NUCLEOTIDE SEQUENCE [LARGE SCALE GENOMIC DNA]</scope>
    <source>
        <strain>GE5 / Orsay</strain>
    </source>
</reference>
<reference key="2">
    <citation type="journal article" date="2012" name="Curr. Microbiol.">
        <title>Re-annotation of two hyperthermophilic archaea Pyrococcus abyssi GE5 and Pyrococcus furiosus DSM 3638.</title>
        <authorList>
            <person name="Gao J."/>
            <person name="Wang J."/>
        </authorList>
    </citation>
    <scope>GENOME REANNOTATION</scope>
    <source>
        <strain>GE5 / Orsay</strain>
    </source>
</reference>
<keyword id="KW-0028">Amino-acid biosynthesis</keyword>
<keyword id="KW-0100">Branched-chain amino acid biosynthesis</keyword>
<keyword id="KW-0460">Magnesium</keyword>
<keyword id="KW-0479">Metal-binding</keyword>
<keyword id="KW-0521">NADP</keyword>
<keyword id="KW-0560">Oxidoreductase</keyword>
<organism>
    <name type="scientific">Pyrococcus abyssi (strain GE5 / Orsay)</name>
    <dbReference type="NCBI Taxonomy" id="272844"/>
    <lineage>
        <taxon>Archaea</taxon>
        <taxon>Methanobacteriati</taxon>
        <taxon>Methanobacteriota</taxon>
        <taxon>Thermococci</taxon>
        <taxon>Thermococcales</taxon>
        <taxon>Thermococcaceae</taxon>
        <taxon>Pyrococcus</taxon>
    </lineage>
</organism>
<name>ILVC_PYRAB</name>
<proteinExistence type="inferred from homology"/>